<proteinExistence type="inferred from homology"/>
<dbReference type="EMBL" id="AM946015">
    <property type="protein sequence ID" value="CAR43770.1"/>
    <property type="molecule type" value="Genomic_DNA"/>
</dbReference>
<dbReference type="RefSeq" id="WP_015912069.1">
    <property type="nucleotide sequence ID" value="NC_012004.1"/>
</dbReference>
<dbReference type="SMR" id="B9DW66"/>
<dbReference type="STRING" id="218495.SUB1779"/>
<dbReference type="KEGG" id="sub:SUB1779"/>
<dbReference type="eggNOG" id="COG1058">
    <property type="taxonomic scope" value="Bacteria"/>
</dbReference>
<dbReference type="eggNOG" id="COG1546">
    <property type="taxonomic scope" value="Bacteria"/>
</dbReference>
<dbReference type="HOGENOM" id="CLU_030805_9_3_9"/>
<dbReference type="OrthoDB" id="9801454at2"/>
<dbReference type="Proteomes" id="UP000000449">
    <property type="component" value="Chromosome"/>
</dbReference>
<dbReference type="CDD" id="cd00885">
    <property type="entry name" value="cinA"/>
    <property type="match status" value="1"/>
</dbReference>
<dbReference type="Gene3D" id="3.30.70.2860">
    <property type="match status" value="1"/>
</dbReference>
<dbReference type="Gene3D" id="3.90.950.20">
    <property type="entry name" value="CinA-like"/>
    <property type="match status" value="1"/>
</dbReference>
<dbReference type="Gene3D" id="3.40.980.10">
    <property type="entry name" value="MoaB/Mog-like domain"/>
    <property type="match status" value="1"/>
</dbReference>
<dbReference type="HAMAP" id="MF_00226_B">
    <property type="entry name" value="CinA_B"/>
    <property type="match status" value="1"/>
</dbReference>
<dbReference type="InterPro" id="IPR050101">
    <property type="entry name" value="CinA"/>
</dbReference>
<dbReference type="InterPro" id="IPR036653">
    <property type="entry name" value="CinA-like_C"/>
</dbReference>
<dbReference type="InterPro" id="IPR008136">
    <property type="entry name" value="CinA_C"/>
</dbReference>
<dbReference type="InterPro" id="IPR041424">
    <property type="entry name" value="CinA_KH"/>
</dbReference>
<dbReference type="InterPro" id="IPR008135">
    <property type="entry name" value="Competence-induced_CinA"/>
</dbReference>
<dbReference type="InterPro" id="IPR036425">
    <property type="entry name" value="MoaB/Mog-like_dom_sf"/>
</dbReference>
<dbReference type="InterPro" id="IPR001453">
    <property type="entry name" value="MoaB/Mog_dom"/>
</dbReference>
<dbReference type="NCBIfam" id="TIGR00200">
    <property type="entry name" value="cinA_nterm"/>
    <property type="match status" value="1"/>
</dbReference>
<dbReference type="NCBIfam" id="TIGR00199">
    <property type="entry name" value="PncC_domain"/>
    <property type="match status" value="1"/>
</dbReference>
<dbReference type="NCBIfam" id="NF001813">
    <property type="entry name" value="PRK00549.1"/>
    <property type="match status" value="1"/>
</dbReference>
<dbReference type="PANTHER" id="PTHR13939">
    <property type="entry name" value="NICOTINAMIDE-NUCLEOTIDE AMIDOHYDROLASE PNCC"/>
    <property type="match status" value="1"/>
</dbReference>
<dbReference type="PANTHER" id="PTHR13939:SF0">
    <property type="entry name" value="NMN AMIDOHYDROLASE-LIKE PROTEIN YFAY"/>
    <property type="match status" value="1"/>
</dbReference>
<dbReference type="Pfam" id="PF02464">
    <property type="entry name" value="CinA"/>
    <property type="match status" value="1"/>
</dbReference>
<dbReference type="Pfam" id="PF18146">
    <property type="entry name" value="CinA_KH"/>
    <property type="match status" value="1"/>
</dbReference>
<dbReference type="Pfam" id="PF00994">
    <property type="entry name" value="MoCF_biosynth"/>
    <property type="match status" value="1"/>
</dbReference>
<dbReference type="PIRSF" id="PIRSF006728">
    <property type="entry name" value="CinA"/>
    <property type="match status" value="1"/>
</dbReference>
<dbReference type="SMART" id="SM00852">
    <property type="entry name" value="MoCF_biosynth"/>
    <property type="match status" value="1"/>
</dbReference>
<dbReference type="SUPFAM" id="SSF142433">
    <property type="entry name" value="CinA-like"/>
    <property type="match status" value="1"/>
</dbReference>
<dbReference type="SUPFAM" id="SSF53218">
    <property type="entry name" value="Molybdenum cofactor biosynthesis proteins"/>
    <property type="match status" value="1"/>
</dbReference>
<accession>B9DW66</accession>
<sequence>MKAEIIAVGTELLTGQVLNTNAQFLSEKMAEIGVDVFFQTAVGDNESRLLNLLDIASQRSDLILLCGGLGPTEDDLTKQTVASFLGKSLVFEPSASQKLDHFFASRPHYSRTPNNERQAQIIEGSTPIPNITGLAVGGILEVDGVTYVLLPGPPSELKPMVNQYLLPALSGNHTALYSRVLRFFGIGESQLVTILSEMIHKQSDPTIAPYAKIGEVTLRLSTKAETPEQAKAKLDGLEQKILQTPSFEGGLLADYHYGYGETNSLSAEVVNMLKERSMTITAAESLTAGLFQSTIADFPGSSKLFRGGFVTYHIEEKAKMLQLQLSDLELHGVVSAFTAKKMAEQSRHLTASDIGVGLTGVAGPDALEGHNVGTVFIGIATLKGAKSYKVSIGGRSRSDIRYIACLHAFDLVRKTLLNGLNLL</sequence>
<organism>
    <name type="scientific">Streptococcus uberis (strain ATCC BAA-854 / 0140J)</name>
    <dbReference type="NCBI Taxonomy" id="218495"/>
    <lineage>
        <taxon>Bacteria</taxon>
        <taxon>Bacillati</taxon>
        <taxon>Bacillota</taxon>
        <taxon>Bacilli</taxon>
        <taxon>Lactobacillales</taxon>
        <taxon>Streptococcaceae</taxon>
        <taxon>Streptococcus</taxon>
    </lineage>
</organism>
<name>CINA_STRU0</name>
<reference key="1">
    <citation type="journal article" date="2009" name="BMC Genomics">
        <title>Evidence for niche adaptation in the genome of the bovine pathogen Streptococcus uberis.</title>
        <authorList>
            <person name="Ward P.N."/>
            <person name="Holden M.T.G."/>
            <person name="Leigh J.A."/>
            <person name="Lennard N."/>
            <person name="Bignell A."/>
            <person name="Barron A."/>
            <person name="Clark L."/>
            <person name="Quail M.A."/>
            <person name="Woodward J."/>
            <person name="Barrell B.G."/>
            <person name="Egan S.A."/>
            <person name="Field T.R."/>
            <person name="Maskell D."/>
            <person name="Kehoe M."/>
            <person name="Dowson C.G."/>
            <person name="Chanter N."/>
            <person name="Whatmore A.M."/>
            <person name="Bentley S.D."/>
            <person name="Parkhill J."/>
        </authorList>
    </citation>
    <scope>NUCLEOTIDE SEQUENCE [LARGE SCALE GENOMIC DNA]</scope>
    <source>
        <strain>ATCC BAA-854 / 0140J</strain>
    </source>
</reference>
<keyword id="KW-1185">Reference proteome</keyword>
<evidence type="ECO:0000255" key="1">
    <source>
        <dbReference type="HAMAP-Rule" id="MF_00226"/>
    </source>
</evidence>
<comment type="similarity">
    <text evidence="1">Belongs to the CinA family.</text>
</comment>
<feature type="chain" id="PRO_1000124992" description="Putative competence-damage inducible protein">
    <location>
        <begin position="1"/>
        <end position="423"/>
    </location>
</feature>
<gene>
    <name evidence="1" type="primary">cinA</name>
    <name type="ordered locus">SUB1779</name>
</gene>
<protein>
    <recommendedName>
        <fullName evidence="1">Putative competence-damage inducible protein</fullName>
    </recommendedName>
</protein>